<comment type="function">
    <text evidence="1">Catalyzes the initial reaction in O-linked oligosaccharide biosynthesis, the transfer of an N-acetyl-D-galactosamine residue to a serine or threonine residue on the protein receptor. Although it displays a much weaker activity toward all substrates tested compared to GALNT2, it is able to transfer up to seven GalNAc residues to the Muc5AC peptide, suggesting that it can fill vicinal Thr/Ser residues in cooperation with other GALNT proteins. Prefers Muc1a as substrate (By similarity).</text>
</comment>
<comment type="catalytic activity">
    <reaction>
        <text>L-seryl-[protein] + UDP-N-acetyl-alpha-D-galactosamine = a 3-O-[N-acetyl-alpha-D-galactosaminyl]-L-seryl-[protein] + UDP + H(+)</text>
        <dbReference type="Rhea" id="RHEA:23956"/>
        <dbReference type="Rhea" id="RHEA-COMP:9863"/>
        <dbReference type="Rhea" id="RHEA-COMP:12788"/>
        <dbReference type="ChEBI" id="CHEBI:15378"/>
        <dbReference type="ChEBI" id="CHEBI:29999"/>
        <dbReference type="ChEBI" id="CHEBI:53604"/>
        <dbReference type="ChEBI" id="CHEBI:58223"/>
        <dbReference type="ChEBI" id="CHEBI:67138"/>
        <dbReference type="EC" id="2.4.1.41"/>
    </reaction>
</comment>
<comment type="catalytic activity">
    <reaction>
        <text>L-threonyl-[protein] + UDP-N-acetyl-alpha-D-galactosamine = a 3-O-[N-acetyl-alpha-D-galactosaminyl]-L-threonyl-[protein] + UDP + H(+)</text>
        <dbReference type="Rhea" id="RHEA:52424"/>
        <dbReference type="Rhea" id="RHEA-COMP:11060"/>
        <dbReference type="Rhea" id="RHEA-COMP:11689"/>
        <dbReference type="ChEBI" id="CHEBI:15378"/>
        <dbReference type="ChEBI" id="CHEBI:30013"/>
        <dbReference type="ChEBI" id="CHEBI:58223"/>
        <dbReference type="ChEBI" id="CHEBI:67138"/>
        <dbReference type="ChEBI" id="CHEBI:87075"/>
        <dbReference type="EC" id="2.4.1.41"/>
    </reaction>
</comment>
<comment type="cofactor">
    <cofactor evidence="1">
        <name>Mn(2+)</name>
        <dbReference type="ChEBI" id="CHEBI:29035"/>
    </cofactor>
</comment>
<comment type="pathway">
    <text>Protein modification; protein glycosylation.</text>
</comment>
<comment type="subcellular location">
    <subcellularLocation>
        <location evidence="1">Golgi apparatus membrane</location>
        <topology evidence="1">Single-pass type II membrane protein</topology>
    </subcellularLocation>
</comment>
<comment type="tissue specificity">
    <text evidence="5">Specifically expressed in testis.</text>
</comment>
<comment type="domain">
    <text evidence="1">There are two conserved domains in the glycosyltransferase region: the N-terminal domain (domain A, also called GT1 motif), which is probably involved in manganese coordination and substrate binding and the C-terminal domain (domain B, also called Gal/GalNAc-T motif), which is probably involved in catalytic reaction and UDP-Gal binding.</text>
</comment>
<comment type="domain">
    <text evidence="1">The ricin B-type lectin domain binds to GalNAc and contributes to the glycopeptide specificity.</text>
</comment>
<comment type="similarity">
    <text evidence="6">Belongs to the glycosyltransferase 2 family. GalNAc-T subfamily.</text>
</comment>
<comment type="online information" name="Functional Glycomics Gateway - GTase">
    <link uri="http://www.functionalglycomics.org/glycomics/molecule/jsp/glycoEnzyme/viewGlycoEnzyme.jsp?gbpId=gt_mou_527"/>
    <text>Polypeptide N-acetylgalactosaminyltransferase-like protein 2</text>
</comment>
<sequence length="638" mass="72321">MLPRKRPRSGRSRLQFLLLFLTLGCVLMMVILLHPPPPTLHQAVTAQASKHSPDTGYRLDFGDSQEWVLEAETEGDEYSLLDGLPSFISLQEDQLLVAVASPRARRSQSQGRRQGSYQFIKHRSRRWDEEALEKDWRTEEDGEESEEVLTPLGPDSDGLNKPLSARLPLRRVLPEVRHPLCLQQHPTSGLPTASVILCFHDEAWPTLLRTVHSILDTAPRALLQEIILVDDLSQQELLKSALSEYVARLEAVKLLRSNRRLGTIGARMLGATRATGDVLVFMDAHCECHPGWLEPLLSRIADDRSRVVSPVIDVIDWKTLQYSASKLHRGTLDWKLDFRWKPLGEQEQKALPSPISPVRSPVVPREVVAVDRHYFQNTGAYDPLLSLGDSENLEMSFKAWLCGGSVEILPCSRVGHIYRSQDASSRPDPEVALKNKIIIAETWLSSFKETFYRHIPEAFTLSKVAKPDCTERLKLQRRLGCRTFHWFLANVYPELYPSDHRPRFSGKLHNTGFGLCADCQADGDILGCPMTLAPCSNNRQQQNLEHTGRKEILFGGPQRLCFDVRGGRVILQNCTEEGPAIHQQHWDFQEDGMIIHVLSGKCMEAGVQPSNKDLYLRQCDGKTSQLWRFDQIHPVDER</sequence>
<keyword id="KW-1015">Disulfide bond</keyword>
<keyword id="KW-0325">Glycoprotein</keyword>
<keyword id="KW-0328">Glycosyltransferase</keyword>
<keyword id="KW-0333">Golgi apparatus</keyword>
<keyword id="KW-0430">Lectin</keyword>
<keyword id="KW-0464">Manganese</keyword>
<keyword id="KW-0472">Membrane</keyword>
<keyword id="KW-0479">Metal-binding</keyword>
<keyword id="KW-1185">Reference proteome</keyword>
<keyword id="KW-0735">Signal-anchor</keyword>
<keyword id="KW-0808">Transferase</keyword>
<keyword id="KW-0812">Transmembrane</keyword>
<keyword id="KW-1133">Transmembrane helix</keyword>
<organism>
    <name type="scientific">Mus musculus</name>
    <name type="common">Mouse</name>
    <dbReference type="NCBI Taxonomy" id="10090"/>
    <lineage>
        <taxon>Eukaryota</taxon>
        <taxon>Metazoa</taxon>
        <taxon>Chordata</taxon>
        <taxon>Craniata</taxon>
        <taxon>Vertebrata</taxon>
        <taxon>Euteleostomi</taxon>
        <taxon>Mammalia</taxon>
        <taxon>Eutheria</taxon>
        <taxon>Euarchontoglires</taxon>
        <taxon>Glires</taxon>
        <taxon>Rodentia</taxon>
        <taxon>Myomorpha</taxon>
        <taxon>Muroidea</taxon>
        <taxon>Muridae</taxon>
        <taxon>Murinae</taxon>
        <taxon>Mus</taxon>
        <taxon>Mus</taxon>
    </lineage>
</organism>
<accession>Q9D2N8</accession>
<accession>A3KN88</accession>
<reference key="1">
    <citation type="journal article" date="2005" name="Science">
        <title>The transcriptional landscape of the mammalian genome.</title>
        <authorList>
            <person name="Carninci P."/>
            <person name="Kasukawa T."/>
            <person name="Katayama S."/>
            <person name="Gough J."/>
            <person name="Frith M.C."/>
            <person name="Maeda N."/>
            <person name="Oyama R."/>
            <person name="Ravasi T."/>
            <person name="Lenhard B."/>
            <person name="Wells C."/>
            <person name="Kodzius R."/>
            <person name="Shimokawa K."/>
            <person name="Bajic V.B."/>
            <person name="Brenner S.E."/>
            <person name="Batalov S."/>
            <person name="Forrest A.R."/>
            <person name="Zavolan M."/>
            <person name="Davis M.J."/>
            <person name="Wilming L.G."/>
            <person name="Aidinis V."/>
            <person name="Allen J.E."/>
            <person name="Ambesi-Impiombato A."/>
            <person name="Apweiler R."/>
            <person name="Aturaliya R.N."/>
            <person name="Bailey T.L."/>
            <person name="Bansal M."/>
            <person name="Baxter L."/>
            <person name="Beisel K.W."/>
            <person name="Bersano T."/>
            <person name="Bono H."/>
            <person name="Chalk A.M."/>
            <person name="Chiu K.P."/>
            <person name="Choudhary V."/>
            <person name="Christoffels A."/>
            <person name="Clutterbuck D.R."/>
            <person name="Crowe M.L."/>
            <person name="Dalla E."/>
            <person name="Dalrymple B.P."/>
            <person name="de Bono B."/>
            <person name="Della Gatta G."/>
            <person name="di Bernardo D."/>
            <person name="Down T."/>
            <person name="Engstrom P."/>
            <person name="Fagiolini M."/>
            <person name="Faulkner G."/>
            <person name="Fletcher C.F."/>
            <person name="Fukushima T."/>
            <person name="Furuno M."/>
            <person name="Futaki S."/>
            <person name="Gariboldi M."/>
            <person name="Georgii-Hemming P."/>
            <person name="Gingeras T.R."/>
            <person name="Gojobori T."/>
            <person name="Green R.E."/>
            <person name="Gustincich S."/>
            <person name="Harbers M."/>
            <person name="Hayashi Y."/>
            <person name="Hensch T.K."/>
            <person name="Hirokawa N."/>
            <person name="Hill D."/>
            <person name="Huminiecki L."/>
            <person name="Iacono M."/>
            <person name="Ikeo K."/>
            <person name="Iwama A."/>
            <person name="Ishikawa T."/>
            <person name="Jakt M."/>
            <person name="Kanapin A."/>
            <person name="Katoh M."/>
            <person name="Kawasawa Y."/>
            <person name="Kelso J."/>
            <person name="Kitamura H."/>
            <person name="Kitano H."/>
            <person name="Kollias G."/>
            <person name="Krishnan S.P."/>
            <person name="Kruger A."/>
            <person name="Kummerfeld S.K."/>
            <person name="Kurochkin I.V."/>
            <person name="Lareau L.F."/>
            <person name="Lazarevic D."/>
            <person name="Lipovich L."/>
            <person name="Liu J."/>
            <person name="Liuni S."/>
            <person name="McWilliam S."/>
            <person name="Madan Babu M."/>
            <person name="Madera M."/>
            <person name="Marchionni L."/>
            <person name="Matsuda H."/>
            <person name="Matsuzawa S."/>
            <person name="Miki H."/>
            <person name="Mignone F."/>
            <person name="Miyake S."/>
            <person name="Morris K."/>
            <person name="Mottagui-Tabar S."/>
            <person name="Mulder N."/>
            <person name="Nakano N."/>
            <person name="Nakauchi H."/>
            <person name="Ng P."/>
            <person name="Nilsson R."/>
            <person name="Nishiguchi S."/>
            <person name="Nishikawa S."/>
            <person name="Nori F."/>
            <person name="Ohara O."/>
            <person name="Okazaki Y."/>
            <person name="Orlando V."/>
            <person name="Pang K.C."/>
            <person name="Pavan W.J."/>
            <person name="Pavesi G."/>
            <person name="Pesole G."/>
            <person name="Petrovsky N."/>
            <person name="Piazza S."/>
            <person name="Reed J."/>
            <person name="Reid J.F."/>
            <person name="Ring B.Z."/>
            <person name="Ringwald M."/>
            <person name="Rost B."/>
            <person name="Ruan Y."/>
            <person name="Salzberg S.L."/>
            <person name="Sandelin A."/>
            <person name="Schneider C."/>
            <person name="Schoenbach C."/>
            <person name="Sekiguchi K."/>
            <person name="Semple C.A."/>
            <person name="Seno S."/>
            <person name="Sessa L."/>
            <person name="Sheng Y."/>
            <person name="Shibata Y."/>
            <person name="Shimada H."/>
            <person name="Shimada K."/>
            <person name="Silva D."/>
            <person name="Sinclair B."/>
            <person name="Sperling S."/>
            <person name="Stupka E."/>
            <person name="Sugiura K."/>
            <person name="Sultana R."/>
            <person name="Takenaka Y."/>
            <person name="Taki K."/>
            <person name="Tammoja K."/>
            <person name="Tan S.L."/>
            <person name="Tang S."/>
            <person name="Taylor M.S."/>
            <person name="Tegner J."/>
            <person name="Teichmann S.A."/>
            <person name="Ueda H.R."/>
            <person name="van Nimwegen E."/>
            <person name="Verardo R."/>
            <person name="Wei C.L."/>
            <person name="Yagi K."/>
            <person name="Yamanishi H."/>
            <person name="Zabarovsky E."/>
            <person name="Zhu S."/>
            <person name="Zimmer A."/>
            <person name="Hide W."/>
            <person name="Bult C."/>
            <person name="Grimmond S.M."/>
            <person name="Teasdale R.D."/>
            <person name="Liu E.T."/>
            <person name="Brusic V."/>
            <person name="Quackenbush J."/>
            <person name="Wahlestedt C."/>
            <person name="Mattick J.S."/>
            <person name="Hume D.A."/>
            <person name="Kai C."/>
            <person name="Sasaki D."/>
            <person name="Tomaru Y."/>
            <person name="Fukuda S."/>
            <person name="Kanamori-Katayama M."/>
            <person name="Suzuki M."/>
            <person name="Aoki J."/>
            <person name="Arakawa T."/>
            <person name="Iida J."/>
            <person name="Imamura K."/>
            <person name="Itoh M."/>
            <person name="Kato T."/>
            <person name="Kawaji H."/>
            <person name="Kawagashira N."/>
            <person name="Kawashima T."/>
            <person name="Kojima M."/>
            <person name="Kondo S."/>
            <person name="Konno H."/>
            <person name="Nakano K."/>
            <person name="Ninomiya N."/>
            <person name="Nishio T."/>
            <person name="Okada M."/>
            <person name="Plessy C."/>
            <person name="Shibata K."/>
            <person name="Shiraki T."/>
            <person name="Suzuki S."/>
            <person name="Tagami M."/>
            <person name="Waki K."/>
            <person name="Watahiki A."/>
            <person name="Okamura-Oho Y."/>
            <person name="Suzuki H."/>
            <person name="Kawai J."/>
            <person name="Hayashizaki Y."/>
        </authorList>
    </citation>
    <scope>NUCLEOTIDE SEQUENCE [LARGE SCALE MRNA]</scope>
    <source>
        <strain>C57BL/6J</strain>
        <tissue>Skin</tissue>
    </source>
</reference>
<reference key="2">
    <citation type="journal article" date="2004" name="Genome Res.">
        <title>The status, quality, and expansion of the NIH full-length cDNA project: the Mammalian Gene Collection (MGC).</title>
        <authorList>
            <consortium name="The MGC Project Team"/>
        </authorList>
    </citation>
    <scope>NUCLEOTIDE SEQUENCE [LARGE SCALE MRNA]</scope>
</reference>
<reference key="3">
    <citation type="journal article" date="2003" name="Glycobiology">
        <title>Expression of UDP-GalNAc:polypeptide N-acetylgalactosaminyltransferase isoforms in murine tissues determined by real-time PCR: a new view of a large family.</title>
        <authorList>
            <person name="Young W.W. Jr."/>
            <person name="Holcomb D.R."/>
            <person name="Ten Hagen K.G."/>
            <person name="Tabak L.A."/>
        </authorList>
    </citation>
    <scope>TISSUE SPECIFICITY</scope>
</reference>
<name>GLT15_MOUSE</name>
<protein>
    <recommendedName>
        <fullName>Polypeptide N-acetylgalactosaminyltransferase 15</fullName>
        <ecNumber>2.4.1.41</ecNumber>
    </recommendedName>
    <alternativeName>
        <fullName>Polypeptide GalNAc transferase-like protein 2</fullName>
        <shortName>GalNAc-T-like protein 2</shortName>
        <shortName>pp-GaNTase-like protein 2</shortName>
    </alternativeName>
    <alternativeName>
        <fullName>Polypeptide N-acetylgalactosaminyltransferase-like protein 2</fullName>
    </alternativeName>
    <alternativeName>
        <fullName>Protein-UDP acetylgalactosaminyltransferase-like protein 2</fullName>
    </alternativeName>
    <alternativeName>
        <fullName>UDP-GalNAc:polypeptide N-acetylgalactosaminyltransferase-like protein 2</fullName>
    </alternativeName>
</protein>
<feature type="chain" id="PRO_0000059138" description="Polypeptide N-acetylgalactosaminyltransferase 15">
    <location>
        <begin position="1"/>
        <end position="638"/>
    </location>
</feature>
<feature type="topological domain" description="Cytoplasmic" evidence="2">
    <location>
        <begin position="1"/>
        <end position="12"/>
    </location>
</feature>
<feature type="transmembrane region" description="Helical; Signal-anchor for type II membrane protein" evidence="2">
    <location>
        <begin position="13"/>
        <end position="35"/>
    </location>
</feature>
<feature type="topological domain" description="Lumenal" evidence="2">
    <location>
        <begin position="36"/>
        <end position="638"/>
    </location>
</feature>
<feature type="domain" description="Ricin B-type lectin" evidence="3">
    <location>
        <begin position="503"/>
        <end position="630"/>
    </location>
</feature>
<feature type="region of interest" description="Disordered" evidence="4">
    <location>
        <begin position="134"/>
        <end position="157"/>
    </location>
</feature>
<feature type="region of interest" description="Catalytic subdomain A">
    <location>
        <begin position="190"/>
        <end position="299"/>
    </location>
</feature>
<feature type="region of interest" description="Catalytic subdomain B">
    <location>
        <begin position="357"/>
        <end position="419"/>
    </location>
</feature>
<feature type="binding site" evidence="1">
    <location>
        <position position="231"/>
    </location>
    <ligand>
        <name>substrate</name>
    </ligand>
</feature>
<feature type="binding site" evidence="1">
    <location>
        <position position="260"/>
    </location>
    <ligand>
        <name>substrate</name>
    </ligand>
</feature>
<feature type="binding site" evidence="1">
    <location>
        <position position="283"/>
    </location>
    <ligand>
        <name>Mn(2+)</name>
        <dbReference type="ChEBI" id="CHEBI:29035"/>
    </ligand>
</feature>
<feature type="binding site" evidence="1">
    <location>
        <position position="285"/>
    </location>
    <ligand>
        <name>Mn(2+)</name>
        <dbReference type="ChEBI" id="CHEBI:29035"/>
    </ligand>
</feature>
<feature type="binding site" evidence="1">
    <location>
        <position position="416"/>
    </location>
    <ligand>
        <name>Mn(2+)</name>
        <dbReference type="ChEBI" id="CHEBI:29035"/>
    </ligand>
</feature>
<feature type="binding site" evidence="1">
    <location>
        <position position="419"/>
    </location>
    <ligand>
        <name>substrate</name>
    </ligand>
</feature>
<feature type="glycosylation site" description="N-linked (GlcNAc...) asparagine" evidence="2">
    <location>
        <position position="573"/>
    </location>
</feature>
<feature type="disulfide bond" evidence="3">
    <location>
        <begin position="181"/>
        <end position="411"/>
    </location>
</feature>
<feature type="disulfide bond" evidence="3">
    <location>
        <begin position="402"/>
        <end position="481"/>
    </location>
</feature>
<feature type="disulfide bond" evidence="3">
    <location>
        <begin position="516"/>
        <end position="535"/>
    </location>
</feature>
<feature type="disulfide bond" evidence="3">
    <location>
        <begin position="561"/>
        <end position="574"/>
    </location>
</feature>
<feature type="disulfide bond" evidence="3">
    <location>
        <begin position="602"/>
        <end position="619"/>
    </location>
</feature>
<evidence type="ECO:0000250" key="1"/>
<evidence type="ECO:0000255" key="2"/>
<evidence type="ECO:0000255" key="3">
    <source>
        <dbReference type="PROSITE-ProRule" id="PRU00174"/>
    </source>
</evidence>
<evidence type="ECO:0000256" key="4">
    <source>
        <dbReference type="SAM" id="MobiDB-lite"/>
    </source>
</evidence>
<evidence type="ECO:0000269" key="5">
    <source>
    </source>
</evidence>
<evidence type="ECO:0000305" key="6"/>
<dbReference type="EC" id="2.4.1.41"/>
<dbReference type="EMBL" id="AK019470">
    <property type="protein sequence ID" value="BAB31741.1"/>
    <property type="molecule type" value="mRNA"/>
</dbReference>
<dbReference type="EMBL" id="BC133711">
    <property type="protein sequence ID" value="AAI33712.1"/>
    <property type="molecule type" value="mRNA"/>
</dbReference>
<dbReference type="CCDS" id="CCDS36859.1"/>
<dbReference type="RefSeq" id="NP_084442.1">
    <property type="nucleotide sequence ID" value="NM_030166.3"/>
</dbReference>
<dbReference type="SMR" id="Q9D2N8"/>
<dbReference type="FunCoup" id="Q9D2N8">
    <property type="interactions" value="324"/>
</dbReference>
<dbReference type="STRING" id="10090.ENSMUSP00000022460"/>
<dbReference type="CAZy" id="CBM13">
    <property type="family name" value="Carbohydrate-Binding Module Family 13"/>
</dbReference>
<dbReference type="CAZy" id="GT27">
    <property type="family name" value="Glycosyltransferase Family 27"/>
</dbReference>
<dbReference type="GlyCosmos" id="Q9D2N8">
    <property type="glycosylation" value="1 site, No reported glycans"/>
</dbReference>
<dbReference type="GlyGen" id="Q9D2N8">
    <property type="glycosylation" value="1 site"/>
</dbReference>
<dbReference type="iPTMnet" id="Q9D2N8"/>
<dbReference type="PhosphoSitePlus" id="Q9D2N8"/>
<dbReference type="jPOST" id="Q9D2N8"/>
<dbReference type="PaxDb" id="10090-ENSMUSP00000022460"/>
<dbReference type="ProteomicsDB" id="271231"/>
<dbReference type="Antibodypedia" id="2430">
    <property type="antibodies" value="62 antibodies from 17 providers"/>
</dbReference>
<dbReference type="DNASU" id="78754"/>
<dbReference type="Ensembl" id="ENSMUST00000022460.11">
    <property type="protein sequence ID" value="ENSMUSP00000022460.5"/>
    <property type="gene ID" value="ENSMUSG00000021903.12"/>
</dbReference>
<dbReference type="GeneID" id="78754"/>
<dbReference type="KEGG" id="mmu:78754"/>
<dbReference type="UCSC" id="uc007syb.1">
    <property type="organism name" value="mouse"/>
</dbReference>
<dbReference type="AGR" id="MGI:1926004"/>
<dbReference type="CTD" id="117248"/>
<dbReference type="MGI" id="MGI:1926004">
    <property type="gene designation" value="Galnt15"/>
</dbReference>
<dbReference type="VEuPathDB" id="HostDB:ENSMUSG00000021903"/>
<dbReference type="eggNOG" id="KOG3736">
    <property type="taxonomic scope" value="Eukaryota"/>
</dbReference>
<dbReference type="GeneTree" id="ENSGT00940000160808"/>
<dbReference type="HOGENOM" id="CLU_013477_0_3_1"/>
<dbReference type="InParanoid" id="Q9D2N8"/>
<dbReference type="OMA" id="MVLWGAE"/>
<dbReference type="OrthoDB" id="416652at2759"/>
<dbReference type="PhylomeDB" id="Q9D2N8"/>
<dbReference type="TreeFam" id="TF313267"/>
<dbReference type="Reactome" id="R-MMU-913709">
    <property type="pathway name" value="O-linked glycosylation of mucins"/>
</dbReference>
<dbReference type="UniPathway" id="UPA00378"/>
<dbReference type="BioGRID-ORCS" id="78754">
    <property type="hits" value="6 hits in 80 CRISPR screens"/>
</dbReference>
<dbReference type="PRO" id="PR:Q9D2N8"/>
<dbReference type="Proteomes" id="UP000000589">
    <property type="component" value="Chromosome 14"/>
</dbReference>
<dbReference type="RNAct" id="Q9D2N8">
    <property type="molecule type" value="protein"/>
</dbReference>
<dbReference type="Bgee" id="ENSMUSG00000021903">
    <property type="expression patterns" value="Expressed in hindlimb stylopod muscle and 97 other cell types or tissues"/>
</dbReference>
<dbReference type="ExpressionAtlas" id="Q9D2N8">
    <property type="expression patterns" value="baseline and differential"/>
</dbReference>
<dbReference type="GO" id="GO:0000139">
    <property type="term" value="C:Golgi membrane"/>
    <property type="evidence" value="ECO:0007669"/>
    <property type="project" value="UniProtKB-SubCell"/>
</dbReference>
<dbReference type="GO" id="GO:0030133">
    <property type="term" value="C:transport vesicle"/>
    <property type="evidence" value="ECO:0007669"/>
    <property type="project" value="Ensembl"/>
</dbReference>
<dbReference type="GO" id="GO:0030246">
    <property type="term" value="F:carbohydrate binding"/>
    <property type="evidence" value="ECO:0007669"/>
    <property type="project" value="UniProtKB-KW"/>
</dbReference>
<dbReference type="GO" id="GO:0046872">
    <property type="term" value="F:metal ion binding"/>
    <property type="evidence" value="ECO:0007669"/>
    <property type="project" value="UniProtKB-KW"/>
</dbReference>
<dbReference type="GO" id="GO:0004653">
    <property type="term" value="F:polypeptide N-acetylgalactosaminyltransferase activity"/>
    <property type="evidence" value="ECO:0007669"/>
    <property type="project" value="UniProtKB-EC"/>
</dbReference>
<dbReference type="GO" id="GO:0006486">
    <property type="term" value="P:protein glycosylation"/>
    <property type="evidence" value="ECO:0007669"/>
    <property type="project" value="UniProtKB-UniPathway"/>
</dbReference>
<dbReference type="CDD" id="cd23442">
    <property type="entry name" value="beta-trefoil_Ricin_GALNT15"/>
    <property type="match status" value="1"/>
</dbReference>
<dbReference type="CDD" id="cd02510">
    <property type="entry name" value="pp-GalNAc-T"/>
    <property type="match status" value="1"/>
</dbReference>
<dbReference type="FunFam" id="2.80.10.50:FF:000058">
    <property type="entry name" value="Polypeptide N-acetylgalactosaminyltransferase"/>
    <property type="match status" value="1"/>
</dbReference>
<dbReference type="FunFam" id="3.90.550.10:FF:000081">
    <property type="entry name" value="Polypeptide N-acetylgalactosaminyltransferase"/>
    <property type="match status" value="1"/>
</dbReference>
<dbReference type="Gene3D" id="2.80.10.50">
    <property type="match status" value="1"/>
</dbReference>
<dbReference type="Gene3D" id="3.90.550.10">
    <property type="entry name" value="Spore Coat Polysaccharide Biosynthesis Protein SpsA, Chain A"/>
    <property type="match status" value="1"/>
</dbReference>
<dbReference type="InterPro" id="IPR045885">
    <property type="entry name" value="GalNAc-T"/>
</dbReference>
<dbReference type="InterPro" id="IPR001173">
    <property type="entry name" value="Glyco_trans_2-like"/>
</dbReference>
<dbReference type="InterPro" id="IPR029044">
    <property type="entry name" value="Nucleotide-diphossugar_trans"/>
</dbReference>
<dbReference type="InterPro" id="IPR035992">
    <property type="entry name" value="Ricin_B-like_lectins"/>
</dbReference>
<dbReference type="InterPro" id="IPR000772">
    <property type="entry name" value="Ricin_B_lectin"/>
</dbReference>
<dbReference type="PANTHER" id="PTHR11675">
    <property type="entry name" value="N-ACETYLGALACTOSAMINYLTRANSFERASE"/>
    <property type="match status" value="1"/>
</dbReference>
<dbReference type="PANTHER" id="PTHR11675:SF36">
    <property type="entry name" value="POLYPEPTIDE N-ACETYLGALACTOSAMINYLTRANSFERASE 15"/>
    <property type="match status" value="1"/>
</dbReference>
<dbReference type="Pfam" id="PF00535">
    <property type="entry name" value="Glycos_transf_2"/>
    <property type="match status" value="1"/>
</dbReference>
<dbReference type="Pfam" id="PF00652">
    <property type="entry name" value="Ricin_B_lectin"/>
    <property type="match status" value="1"/>
</dbReference>
<dbReference type="SMART" id="SM00458">
    <property type="entry name" value="RICIN"/>
    <property type="match status" value="1"/>
</dbReference>
<dbReference type="SUPFAM" id="SSF53448">
    <property type="entry name" value="Nucleotide-diphospho-sugar transferases"/>
    <property type="match status" value="1"/>
</dbReference>
<dbReference type="SUPFAM" id="SSF50370">
    <property type="entry name" value="Ricin B-like lectins"/>
    <property type="match status" value="1"/>
</dbReference>
<dbReference type="PROSITE" id="PS50231">
    <property type="entry name" value="RICIN_B_LECTIN"/>
    <property type="match status" value="1"/>
</dbReference>
<gene>
    <name type="primary">Galnt15</name>
    <name type="synonym">Galntl2</name>
</gene>
<proteinExistence type="evidence at transcript level"/>